<keyword id="KW-0027">Amidation</keyword>
<keyword id="KW-0044">Antibiotic</keyword>
<keyword id="KW-0929">Antimicrobial</keyword>
<keyword id="KW-0391">Immunity</keyword>
<keyword id="KW-0399">Innate immunity</keyword>
<keyword id="KW-1185">Reference proteome</keyword>
<keyword id="KW-0964">Secreted</keyword>
<keyword id="KW-0732">Signal</keyword>
<dbReference type="EMBL" id="AB010825">
    <property type="protein sequence ID" value="BAA31507.1"/>
    <property type="molecule type" value="mRNA"/>
</dbReference>
<dbReference type="RefSeq" id="NP_001036833.1">
    <property type="nucleotide sequence ID" value="NM_001043368.2"/>
</dbReference>
<dbReference type="SMR" id="O76146"/>
<dbReference type="STRING" id="7091.O76146"/>
<dbReference type="PaxDb" id="7091-BGIBMGA000017-TA"/>
<dbReference type="EnsemblMetazoa" id="NM_001043368.2">
    <property type="protein sequence ID" value="NP_001036833.1"/>
    <property type="gene ID" value="GeneID_692369"/>
</dbReference>
<dbReference type="GeneID" id="692369"/>
<dbReference type="KEGG" id="bmor:692369"/>
<dbReference type="CTD" id="692369"/>
<dbReference type="eggNOG" id="ENOG502TC6E">
    <property type="taxonomic scope" value="Eukaryota"/>
</dbReference>
<dbReference type="HOGENOM" id="CLU_187909_0_0_1"/>
<dbReference type="InParanoid" id="O76146"/>
<dbReference type="OrthoDB" id="579704at7088"/>
<dbReference type="Proteomes" id="UP000005204">
    <property type="component" value="Unassembled WGS sequence"/>
</dbReference>
<dbReference type="GO" id="GO:0005576">
    <property type="term" value="C:extracellular region"/>
    <property type="evidence" value="ECO:0007669"/>
    <property type="project" value="UniProtKB-SubCell"/>
</dbReference>
<dbReference type="GO" id="GO:0019731">
    <property type="term" value="P:antibacterial humoral response"/>
    <property type="evidence" value="ECO:0007669"/>
    <property type="project" value="InterPro"/>
</dbReference>
<dbReference type="GO" id="GO:0050830">
    <property type="term" value="P:defense response to Gram-positive bacterium"/>
    <property type="evidence" value="ECO:0007669"/>
    <property type="project" value="UniProtKB-ARBA"/>
</dbReference>
<dbReference type="GO" id="GO:0045087">
    <property type="term" value="P:innate immune response"/>
    <property type="evidence" value="ECO:0007669"/>
    <property type="project" value="UniProtKB-KW"/>
</dbReference>
<dbReference type="InterPro" id="IPR000875">
    <property type="entry name" value="Cecropin"/>
</dbReference>
<dbReference type="Pfam" id="PF00272">
    <property type="entry name" value="Cecropin"/>
    <property type="match status" value="1"/>
</dbReference>
<sequence length="61" mass="6436">MKFSKIFVFVFAIVFATASVSAAPGNFFKDLEKMGQRVRDAVISAAPAVDTLAKAKALGQG</sequence>
<evidence type="ECO:0000255" key="1"/>
<evidence type="ECO:0000269" key="2">
    <source>
    </source>
</evidence>
<evidence type="ECO:0000305" key="3"/>
<feature type="signal peptide" evidence="1">
    <location>
        <begin position="1"/>
        <end position="22"/>
    </location>
</feature>
<feature type="propeptide" id="PRO_0000004828" description="Removed by a dipeptidylpeptidase">
    <location>
        <begin position="23"/>
        <end position="24"/>
    </location>
</feature>
<feature type="chain" id="PRO_0000004829" description="Cecropin-D">
    <location>
        <begin position="25"/>
        <end position="60"/>
    </location>
</feature>
<feature type="modified residue" description="Glutamine amide" evidence="1">
    <location>
        <position position="60"/>
    </location>
</feature>
<protein>
    <recommendedName>
        <fullName>Cecropin-D</fullName>
    </recommendedName>
</protein>
<comment type="function">
    <text>Cecropins have lytic and antibacterial activity against several Gram-positive and Gram-negative bacteria.</text>
</comment>
<comment type="subcellular location">
    <subcellularLocation>
        <location>Secreted</location>
    </subcellularLocation>
</comment>
<comment type="tissue specificity">
    <text evidence="2">Mainly in fat body. Lower in hemocytes. Not expressed in midguts, malpighian tubules and silk glands.</text>
</comment>
<comment type="induction">
    <text evidence="2">By bacterial infection.</text>
</comment>
<comment type="similarity">
    <text evidence="3">Belongs to the cecropin family.</text>
</comment>
<reference key="1">
    <citation type="journal article" date="1999" name="Comp. Biochem. Physiol.">
        <title>cDNA cloning and gene expression of cecropin D, an antibacterial protein in the silkworm, Bombyx mori.</title>
        <authorList>
            <person name="Yang J."/>
            <person name="Furukawa S."/>
            <person name="Sagisaka A."/>
            <person name="Ishibashi J."/>
            <person name="Taniai K."/>
            <person name="Shono T."/>
            <person name="Yamakawa M."/>
        </authorList>
    </citation>
    <scope>NUCLEOTIDE SEQUENCE [MRNA]</scope>
    <scope>TISSUE SPECIFICITY</scope>
    <scope>INDUCTION</scope>
    <source>
        <tissue>Larval fat body</tissue>
    </source>
</reference>
<proteinExistence type="evidence at transcript level"/>
<name>CECD_BOMMO</name>
<accession>O76146</accession>
<organism>
    <name type="scientific">Bombyx mori</name>
    <name type="common">Silk moth</name>
    <dbReference type="NCBI Taxonomy" id="7091"/>
    <lineage>
        <taxon>Eukaryota</taxon>
        <taxon>Metazoa</taxon>
        <taxon>Ecdysozoa</taxon>
        <taxon>Arthropoda</taxon>
        <taxon>Hexapoda</taxon>
        <taxon>Insecta</taxon>
        <taxon>Pterygota</taxon>
        <taxon>Neoptera</taxon>
        <taxon>Endopterygota</taxon>
        <taxon>Lepidoptera</taxon>
        <taxon>Glossata</taxon>
        <taxon>Ditrysia</taxon>
        <taxon>Bombycoidea</taxon>
        <taxon>Bombycidae</taxon>
        <taxon>Bombycinae</taxon>
        <taxon>Bombyx</taxon>
    </lineage>
</organism>
<gene>
    <name type="primary">CECD</name>
</gene>